<sequence>MYRNVTQEIFMEQTKIILDENEMPKRWYNVLSDLPSPIDPPLDPRTWQPINPEALEPIFAKELIRQEMSSDRYIDIPAEILDVYRLWRPSPLFRAHQLEKDLKTPAKIYYKYEGVSPAGSHKTNTSIAQAYYNMKEGTERLTTETGAGQWGSALSLACNYFDLECKVYMVRSSYYQKPYRKSLMTLWGGNVVPSPSPDTEFGRKILKEQPDTPGSLGIAISEAVEDAIAHDNTKYTLGSVLNHVVLHQTVIGAECKKQLEQVEEYPDVVIGCCGGGSNLGGIGLEFIKDRLEGKHNARVVAVEPSACPSLTKGEYRYDFGDTAEMTPLLKMYTLGHKHIPPAIHAGGLRYHGDSPIISKLCAEGLMEAVSYGQKEVFDAAVQFARTEGIVPAPESSHAIRCAIDEALEAKQKGEEKVILFNLSGHGHFDMASYDKYFSGELE</sequence>
<name>TRPB2_METMA</name>
<evidence type="ECO:0000250" key="1"/>
<evidence type="ECO:0000305" key="2"/>
<gene>
    <name type="primary">trpB2</name>
    <name type="ordered locus">MM_0337</name>
</gene>
<dbReference type="EC" id="4.2.1.20"/>
<dbReference type="EMBL" id="AE008384">
    <property type="protein sequence ID" value="AAM30033.1"/>
    <property type="molecule type" value="Genomic_DNA"/>
</dbReference>
<dbReference type="SMR" id="Q8Q001"/>
<dbReference type="KEGG" id="mma:MM_0337"/>
<dbReference type="PATRIC" id="fig|192952.21.peg.411"/>
<dbReference type="eggNOG" id="arCOG01432">
    <property type="taxonomic scope" value="Archaea"/>
</dbReference>
<dbReference type="HOGENOM" id="CLU_042858_1_0_2"/>
<dbReference type="UniPathway" id="UPA00035">
    <property type="reaction ID" value="UER00044"/>
</dbReference>
<dbReference type="Proteomes" id="UP000000595">
    <property type="component" value="Chromosome"/>
</dbReference>
<dbReference type="GO" id="GO:0005737">
    <property type="term" value="C:cytoplasm"/>
    <property type="evidence" value="ECO:0007669"/>
    <property type="project" value="TreeGrafter"/>
</dbReference>
<dbReference type="GO" id="GO:0052684">
    <property type="term" value="F:L-serine hydro-lyase (adding indole, L-tryptophan-forming) activity"/>
    <property type="evidence" value="ECO:0007669"/>
    <property type="project" value="TreeGrafter"/>
</dbReference>
<dbReference type="GO" id="GO:0030170">
    <property type="term" value="F:pyridoxal phosphate binding"/>
    <property type="evidence" value="ECO:0007669"/>
    <property type="project" value="InterPro"/>
</dbReference>
<dbReference type="GO" id="GO:0004834">
    <property type="term" value="F:tryptophan synthase activity"/>
    <property type="evidence" value="ECO:0007669"/>
    <property type="project" value="UniProtKB-UniRule"/>
</dbReference>
<dbReference type="CDD" id="cd06446">
    <property type="entry name" value="Trp-synth_B"/>
    <property type="match status" value="1"/>
</dbReference>
<dbReference type="Gene3D" id="3.40.50.1100">
    <property type="match status" value="2"/>
</dbReference>
<dbReference type="HAMAP" id="MF_00133">
    <property type="entry name" value="Trp_synth_beta"/>
    <property type="match status" value="1"/>
</dbReference>
<dbReference type="InterPro" id="IPR006316">
    <property type="entry name" value="Trp_synth_b-like"/>
</dbReference>
<dbReference type="InterPro" id="IPR006653">
    <property type="entry name" value="Trp_synth_b_CS"/>
</dbReference>
<dbReference type="InterPro" id="IPR006654">
    <property type="entry name" value="Trp_synth_beta"/>
</dbReference>
<dbReference type="InterPro" id="IPR023026">
    <property type="entry name" value="Trp_synth_beta/beta-like"/>
</dbReference>
<dbReference type="InterPro" id="IPR001926">
    <property type="entry name" value="TrpB-like_PALP"/>
</dbReference>
<dbReference type="InterPro" id="IPR036052">
    <property type="entry name" value="TrpB-like_PALP_sf"/>
</dbReference>
<dbReference type="NCBIfam" id="NF009057">
    <property type="entry name" value="PRK12391.1"/>
    <property type="match status" value="1"/>
</dbReference>
<dbReference type="NCBIfam" id="TIGR01415">
    <property type="entry name" value="trpB_rel"/>
    <property type="match status" value="1"/>
</dbReference>
<dbReference type="PANTHER" id="PTHR48077:SF6">
    <property type="entry name" value="TRYPTOPHAN SYNTHASE"/>
    <property type="match status" value="1"/>
</dbReference>
<dbReference type="PANTHER" id="PTHR48077">
    <property type="entry name" value="TRYPTOPHAN SYNTHASE-RELATED"/>
    <property type="match status" value="1"/>
</dbReference>
<dbReference type="Pfam" id="PF00291">
    <property type="entry name" value="PALP"/>
    <property type="match status" value="1"/>
</dbReference>
<dbReference type="PIRSF" id="PIRSF001413">
    <property type="entry name" value="Trp_syn_beta"/>
    <property type="match status" value="1"/>
</dbReference>
<dbReference type="PIRSF" id="PIRSF500824">
    <property type="entry name" value="TrpB_prok"/>
    <property type="match status" value="1"/>
</dbReference>
<dbReference type="SUPFAM" id="SSF53686">
    <property type="entry name" value="Tryptophan synthase beta subunit-like PLP-dependent enzymes"/>
    <property type="match status" value="1"/>
</dbReference>
<dbReference type="PROSITE" id="PS00168">
    <property type="entry name" value="TRP_SYNTHASE_BETA"/>
    <property type="match status" value="1"/>
</dbReference>
<proteinExistence type="inferred from homology"/>
<feature type="chain" id="PRO_0000099041" description="Tryptophan synthase beta chain 2">
    <location>
        <begin position="1"/>
        <end position="442"/>
    </location>
</feature>
<feature type="modified residue" description="N6-(pyridoxal phosphate)lysine" evidence="1">
    <location>
        <position position="122"/>
    </location>
</feature>
<accession>Q8Q001</accession>
<keyword id="KW-0028">Amino-acid biosynthesis</keyword>
<keyword id="KW-0057">Aromatic amino acid biosynthesis</keyword>
<keyword id="KW-0456">Lyase</keyword>
<keyword id="KW-0663">Pyridoxal phosphate</keyword>
<keyword id="KW-0822">Tryptophan biosynthesis</keyword>
<comment type="function">
    <text evidence="1">The beta subunit is responsible for the synthesis of L-tryptophan from indole and L-serine.</text>
</comment>
<comment type="catalytic activity">
    <reaction>
        <text>(1S,2R)-1-C-(indol-3-yl)glycerol 3-phosphate + L-serine = D-glyceraldehyde 3-phosphate + L-tryptophan + H2O</text>
        <dbReference type="Rhea" id="RHEA:10532"/>
        <dbReference type="ChEBI" id="CHEBI:15377"/>
        <dbReference type="ChEBI" id="CHEBI:33384"/>
        <dbReference type="ChEBI" id="CHEBI:57912"/>
        <dbReference type="ChEBI" id="CHEBI:58866"/>
        <dbReference type="ChEBI" id="CHEBI:59776"/>
        <dbReference type="EC" id="4.2.1.20"/>
    </reaction>
</comment>
<comment type="cofactor">
    <cofactor evidence="1">
        <name>pyridoxal 5'-phosphate</name>
        <dbReference type="ChEBI" id="CHEBI:597326"/>
    </cofactor>
</comment>
<comment type="pathway">
    <text>Amino-acid biosynthesis; L-tryptophan biosynthesis; L-tryptophan from chorismate: step 5/5.</text>
</comment>
<comment type="subunit">
    <text evidence="1">Tetramer of two alpha and two beta chains.</text>
</comment>
<comment type="similarity">
    <text evidence="2">Belongs to the TrpB family.</text>
</comment>
<reference key="1">
    <citation type="journal article" date="2002" name="J. Mol. Microbiol. Biotechnol.">
        <title>The genome of Methanosarcina mazei: evidence for lateral gene transfer between Bacteria and Archaea.</title>
        <authorList>
            <person name="Deppenmeier U."/>
            <person name="Johann A."/>
            <person name="Hartsch T."/>
            <person name="Merkl R."/>
            <person name="Schmitz R.A."/>
            <person name="Martinez-Arias R."/>
            <person name="Henne A."/>
            <person name="Wiezer A."/>
            <person name="Baeumer S."/>
            <person name="Jacobi C."/>
            <person name="Brueggemann H."/>
            <person name="Lienard T."/>
            <person name="Christmann A."/>
            <person name="Boemecke M."/>
            <person name="Steckel S."/>
            <person name="Bhattacharyya A."/>
            <person name="Lykidis A."/>
            <person name="Overbeek R."/>
            <person name="Klenk H.-P."/>
            <person name="Gunsalus R.P."/>
            <person name="Fritz H.-J."/>
            <person name="Gottschalk G."/>
        </authorList>
    </citation>
    <scope>NUCLEOTIDE SEQUENCE [LARGE SCALE GENOMIC DNA]</scope>
    <source>
        <strain>ATCC BAA-159 / DSM 3647 / Goe1 / Go1 / JCM 11833 / OCM 88</strain>
    </source>
</reference>
<protein>
    <recommendedName>
        <fullName>Tryptophan synthase beta chain 2</fullName>
        <ecNumber>4.2.1.20</ecNumber>
    </recommendedName>
</protein>
<organism>
    <name type="scientific">Methanosarcina mazei (strain ATCC BAA-159 / DSM 3647 / Goe1 / Go1 / JCM 11833 / OCM 88)</name>
    <name type="common">Methanosarcina frisia</name>
    <dbReference type="NCBI Taxonomy" id="192952"/>
    <lineage>
        <taxon>Archaea</taxon>
        <taxon>Methanobacteriati</taxon>
        <taxon>Methanobacteriota</taxon>
        <taxon>Stenosarchaea group</taxon>
        <taxon>Methanomicrobia</taxon>
        <taxon>Methanosarcinales</taxon>
        <taxon>Methanosarcinaceae</taxon>
        <taxon>Methanosarcina</taxon>
    </lineage>
</organism>